<reference key="1">
    <citation type="journal article" date="1996" name="Gen. Comp. Endocrinol.">
        <title>Expression of salmon gonadotropin-releasing hormone (GnRH) and chicken GnRH-II precursor messenger ribonucleic acids in the brain and ovary of goldfish.</title>
        <authorList>
            <person name="Lin X.-W."/>
            <person name="Peter R.E."/>
        </authorList>
    </citation>
    <scope>NUCLEOTIDE SEQUENCE [MRNA]</scope>
    <source>
        <tissue>Brain</tissue>
    </source>
</reference>
<reference key="2">
    <citation type="journal article" date="1997" name="Gen. Comp. Endocrinol.">
        <title>Cloning and expression pattern of a second [His5Trp7Tyr8]gonadotropin-releasing hormone (chicken GnRH-H-II) mRNA in goldfish: evidence for two distinct genes.</title>
        <authorList>
            <person name="Lin X.-W."/>
            <person name="Peter R.E."/>
        </authorList>
    </citation>
    <scope>NUCLEOTIDE SEQUENCE [GENOMIC DNA] OF 33-57</scope>
    <scope>TISSUE SPECIFICITY</scope>
    <source>
        <strain>Comet</strain>
        <strain>Common</strain>
        <tissue>Liver</tissue>
    </source>
</reference>
<dbReference type="EMBL" id="U30386">
    <property type="protein sequence ID" value="AAC59858.1"/>
    <property type="molecule type" value="mRNA"/>
</dbReference>
<dbReference type="EMBL" id="U40568">
    <property type="protein sequence ID" value="AAB87138.1"/>
    <property type="molecule type" value="Genomic_DNA"/>
</dbReference>
<dbReference type="OrthoDB" id="8490433at2759"/>
<dbReference type="Proteomes" id="UP000515129">
    <property type="component" value="Unplaced"/>
</dbReference>
<dbReference type="GO" id="GO:0005615">
    <property type="term" value="C:extracellular space"/>
    <property type="evidence" value="ECO:0000250"/>
    <property type="project" value="UniProtKB"/>
</dbReference>
<dbReference type="GO" id="GO:0005183">
    <property type="term" value="F:gonadotropin hormone-releasing hormone activity"/>
    <property type="evidence" value="ECO:0007669"/>
    <property type="project" value="TreeGrafter"/>
</dbReference>
<dbReference type="GO" id="GO:0031530">
    <property type="term" value="F:gonadotropin-releasing hormone receptor binding"/>
    <property type="evidence" value="ECO:0007669"/>
    <property type="project" value="TreeGrafter"/>
</dbReference>
<dbReference type="InterPro" id="IPR002012">
    <property type="entry name" value="GnRH"/>
</dbReference>
<dbReference type="InterPro" id="IPR019792">
    <property type="entry name" value="Gonadoliberin"/>
</dbReference>
<dbReference type="PANTHER" id="PTHR10522">
    <property type="entry name" value="GONADOLIBERIN"/>
    <property type="match status" value="1"/>
</dbReference>
<dbReference type="PANTHER" id="PTHR10522:SF8">
    <property type="entry name" value="PROGONADOLIBERIN"/>
    <property type="match status" value="1"/>
</dbReference>
<dbReference type="Pfam" id="PF00446">
    <property type="entry name" value="GnRH"/>
    <property type="match status" value="1"/>
</dbReference>
<dbReference type="PROSITE" id="PS00473">
    <property type="entry name" value="GNRH"/>
    <property type="match status" value="1"/>
</dbReference>
<accession>P51924</accession>
<evidence type="ECO:0000250" key="1"/>
<evidence type="ECO:0000269" key="2">
    <source>
    </source>
</evidence>
<evidence type="ECO:0000305" key="3"/>
<gene>
    <name type="primary">gnrh2a</name>
    <name type="synonym">gnrh2</name>
</gene>
<keyword id="KW-0027">Amidation</keyword>
<keyword id="KW-0165">Cleavage on pair of basic residues</keyword>
<keyword id="KW-0372">Hormone</keyword>
<keyword id="KW-0873">Pyrrolidone carboxylic acid</keyword>
<keyword id="KW-1185">Reference proteome</keyword>
<keyword id="KW-0964">Secreted</keyword>
<keyword id="KW-0732">Signal</keyword>
<organism>
    <name type="scientific">Carassius auratus</name>
    <name type="common">Goldfish</name>
    <dbReference type="NCBI Taxonomy" id="7957"/>
    <lineage>
        <taxon>Eukaryota</taxon>
        <taxon>Metazoa</taxon>
        <taxon>Chordata</taxon>
        <taxon>Craniata</taxon>
        <taxon>Vertebrata</taxon>
        <taxon>Euteleostomi</taxon>
        <taxon>Actinopterygii</taxon>
        <taxon>Neopterygii</taxon>
        <taxon>Teleostei</taxon>
        <taxon>Ostariophysi</taxon>
        <taxon>Cypriniformes</taxon>
        <taxon>Cyprinidae</taxon>
        <taxon>Cyprininae</taxon>
        <taxon>Carassius</taxon>
    </lineage>
</organism>
<proteinExistence type="evidence at transcript level"/>
<name>GON2A_CARAU</name>
<comment type="function">
    <text>Stimulates the secretion of gonadotropins.</text>
</comment>
<comment type="subcellular location">
    <subcellularLocation>
        <location>Secreted</location>
    </subcellularLocation>
</comment>
<comment type="tissue specificity">
    <text evidence="2">Olfactory bulbs, hypothalamus and telencephalon, midbrain and posterior brain areas.</text>
</comment>
<comment type="similarity">
    <text evidence="3">Belongs to the GnRH family.</text>
</comment>
<sequence length="86" mass="9770">MVHICRLFVVMGMLLCLSAQFASSQHWSHGWYPGGKREIDVYDSSEVSGEIKLCEAGKCSYLRPQGRNILKTILLDAIIRDSQKRK</sequence>
<protein>
    <recommendedName>
        <fullName>Progonadoliberin IIA</fullName>
    </recommendedName>
    <component>
        <recommendedName>
            <fullName>Gonadoliberin II</fullName>
        </recommendedName>
        <alternativeName>
            <fullName>Gonadotropin-releasing hormone II</fullName>
            <shortName>GnRH II</shortName>
        </alternativeName>
        <alternativeName>
            <fullName>Luliberin II</fullName>
        </alternativeName>
        <alternativeName>
            <fullName>Luteinizing hormone-releasing hormone II</fullName>
            <shortName>LH-RH II</shortName>
        </alternativeName>
    </component>
    <component>
        <recommendedName>
            <fullName>GnRH-associated peptide IIA</fullName>
        </recommendedName>
    </component>
</protein>
<feature type="signal peptide" evidence="1">
    <location>
        <begin position="1"/>
        <end position="24"/>
    </location>
</feature>
<feature type="chain" id="PRO_0000012468" description="Progonadoliberin IIA">
    <location>
        <begin position="25"/>
        <end position="86"/>
    </location>
</feature>
<feature type="peptide" id="PRO_0000012469" description="Gonadoliberin II">
    <location>
        <begin position="25"/>
        <end position="34"/>
    </location>
</feature>
<feature type="peptide" id="PRO_0000012470" description="GnRH-associated peptide IIA">
    <location>
        <begin position="38"/>
        <end position="86"/>
    </location>
</feature>
<feature type="modified residue" description="Pyrrolidone carboxylic acid" evidence="1">
    <location>
        <position position="25"/>
    </location>
</feature>
<feature type="modified residue" description="Glycine amide" evidence="1">
    <location>
        <position position="34"/>
    </location>
</feature>